<gene>
    <name type="ordered locus">BB_0006</name>
</gene>
<protein>
    <recommendedName>
        <fullName>Putative transport protein BB_0006</fullName>
    </recommendedName>
</protein>
<reference key="1">
    <citation type="journal article" date="1997" name="Nature">
        <title>Genomic sequence of a Lyme disease spirochaete, Borrelia burgdorferi.</title>
        <authorList>
            <person name="Fraser C.M."/>
            <person name="Casjens S."/>
            <person name="Huang W.M."/>
            <person name="Sutton G.G."/>
            <person name="Clayton R.A."/>
            <person name="Lathigra R."/>
            <person name="White O."/>
            <person name="Ketchum K.A."/>
            <person name="Dodson R.J."/>
            <person name="Hickey E.K."/>
            <person name="Gwinn M.L."/>
            <person name="Dougherty B.A."/>
            <person name="Tomb J.-F."/>
            <person name="Fleischmann R.D."/>
            <person name="Richardson D.L."/>
            <person name="Peterson J.D."/>
            <person name="Kerlavage A.R."/>
            <person name="Quackenbush J."/>
            <person name="Salzberg S.L."/>
            <person name="Hanson M."/>
            <person name="van Vugt R."/>
            <person name="Palmer N."/>
            <person name="Adams M.D."/>
            <person name="Gocayne J.D."/>
            <person name="Weidman J.F."/>
            <person name="Utterback T.R."/>
            <person name="Watthey L."/>
            <person name="McDonald L.A."/>
            <person name="Artiach P."/>
            <person name="Bowman C."/>
            <person name="Garland S.A."/>
            <person name="Fujii C."/>
            <person name="Cotton M.D."/>
            <person name="Horst K."/>
            <person name="Roberts K.M."/>
            <person name="Hatch B."/>
            <person name="Smith H.O."/>
            <person name="Venter J.C."/>
        </authorList>
    </citation>
    <scope>NUCLEOTIDE SEQUENCE [LARGE SCALE GENOMIC DNA]</scope>
    <source>
        <strain>ATCC 35210 / DSM 4680 / CIP 102532 / B31</strain>
    </source>
</reference>
<sequence length="362" mass="41527">MLKDLNTNQGLKPWRVESVFYCIVIVLIFIGAFKIAEAVFKPLAISIVLGFLVYPVYTFLARFKVPKFLIVFIIFFLLFSFSYLIFSFVYYSVTVLMKQLPYYQNQLAFIMKDVLSRYKVDSSVINDVNFSGYIYPFLTRAYNEIIGFTSSLVVVFLLLYFLLSEIHVFEMKLDKAFKKPISTRFIGALDTINNQIGKYLGIKILVSCLTGILVFIGLTLFGQDFPLVWAVLSFVFNFIPSIGSILAVFFIVITSLIQFYPNLNIVLYVFIYNTSIQMLIGNILEPKMQGKRLDISPFLLLCFLFFWGWLWGIVGLLISYPFTVIVKVIVDNVSWLKSFSVFLGGSEILSNISHISSKDKEI</sequence>
<feature type="chain" id="PRO_0000148311" description="Putative transport protein BB_0006">
    <location>
        <begin position="1"/>
        <end position="362"/>
    </location>
</feature>
<feature type="transmembrane region" description="Helical" evidence="1">
    <location>
        <begin position="20"/>
        <end position="40"/>
    </location>
</feature>
<feature type="transmembrane region" description="Helical" evidence="1">
    <location>
        <begin position="43"/>
        <end position="63"/>
    </location>
</feature>
<feature type="transmembrane region" description="Helical" evidence="1">
    <location>
        <begin position="68"/>
        <end position="88"/>
    </location>
</feature>
<feature type="transmembrane region" description="Helical" evidence="1">
    <location>
        <begin position="144"/>
        <end position="164"/>
    </location>
</feature>
<feature type="transmembrane region" description="Helical" evidence="1">
    <location>
        <begin position="212"/>
        <end position="232"/>
    </location>
</feature>
<feature type="transmembrane region" description="Helical" evidence="1">
    <location>
        <begin position="234"/>
        <end position="254"/>
    </location>
</feature>
<feature type="transmembrane region" description="Helical" evidence="1">
    <location>
        <begin position="265"/>
        <end position="285"/>
    </location>
</feature>
<feature type="transmembrane region" description="Helical" evidence="1">
    <location>
        <begin position="304"/>
        <end position="326"/>
    </location>
</feature>
<name>Y006_BORBU</name>
<evidence type="ECO:0000255" key="1"/>
<evidence type="ECO:0000305" key="2"/>
<proteinExistence type="inferred from homology"/>
<organism>
    <name type="scientific">Borreliella burgdorferi (strain ATCC 35210 / DSM 4680 / CIP 102532 / B31)</name>
    <name type="common">Borrelia burgdorferi</name>
    <dbReference type="NCBI Taxonomy" id="224326"/>
    <lineage>
        <taxon>Bacteria</taxon>
        <taxon>Pseudomonadati</taxon>
        <taxon>Spirochaetota</taxon>
        <taxon>Spirochaetia</taxon>
        <taxon>Spirochaetales</taxon>
        <taxon>Borreliaceae</taxon>
        <taxon>Borreliella</taxon>
    </lineage>
</organism>
<keyword id="KW-1003">Cell membrane</keyword>
<keyword id="KW-0472">Membrane</keyword>
<keyword id="KW-1185">Reference proteome</keyword>
<keyword id="KW-0812">Transmembrane</keyword>
<keyword id="KW-1133">Transmembrane helix</keyword>
<keyword id="KW-0813">Transport</keyword>
<comment type="subcellular location">
    <subcellularLocation>
        <location evidence="2">Cell membrane</location>
        <topology evidence="2">Multi-pass membrane protein</topology>
    </subcellularLocation>
</comment>
<comment type="similarity">
    <text evidence="2">Belongs to the autoinducer-2 exporter (AI-2E) (TC 2.A.86) family.</text>
</comment>
<accession>O51039</accession>
<dbReference type="EMBL" id="AE000783">
    <property type="protein sequence ID" value="AAC66397.2"/>
    <property type="molecule type" value="Genomic_DNA"/>
</dbReference>
<dbReference type="PIR" id="F70100">
    <property type="entry name" value="F70100"/>
</dbReference>
<dbReference type="RefSeq" id="NP_212140.2">
    <property type="nucleotide sequence ID" value="NC_001318.1"/>
</dbReference>
<dbReference type="RefSeq" id="WP_002658381.1">
    <property type="nucleotide sequence ID" value="NC_001318.1"/>
</dbReference>
<dbReference type="SMR" id="O51039"/>
<dbReference type="STRING" id="224326.BB_0006"/>
<dbReference type="PaxDb" id="224326-BB_0006"/>
<dbReference type="EnsemblBacteria" id="AAC66397">
    <property type="protein sequence ID" value="AAC66397"/>
    <property type="gene ID" value="BB_0006"/>
</dbReference>
<dbReference type="KEGG" id="bbu:BB_0006"/>
<dbReference type="PATRIC" id="fig|224326.49.peg.404"/>
<dbReference type="HOGENOM" id="CLU_031275_0_0_12"/>
<dbReference type="OrthoDB" id="9799225at2"/>
<dbReference type="Proteomes" id="UP000001807">
    <property type="component" value="Chromosome"/>
</dbReference>
<dbReference type="GO" id="GO:0005886">
    <property type="term" value="C:plasma membrane"/>
    <property type="evidence" value="ECO:0007669"/>
    <property type="project" value="UniProtKB-SubCell"/>
</dbReference>
<dbReference type="GO" id="GO:0055085">
    <property type="term" value="P:transmembrane transport"/>
    <property type="evidence" value="ECO:0007669"/>
    <property type="project" value="TreeGrafter"/>
</dbReference>
<dbReference type="InterPro" id="IPR002549">
    <property type="entry name" value="AI-2E-like"/>
</dbReference>
<dbReference type="PANTHER" id="PTHR21716:SF64">
    <property type="entry name" value="AI-2 TRANSPORT PROTEIN TQSA"/>
    <property type="match status" value="1"/>
</dbReference>
<dbReference type="PANTHER" id="PTHR21716">
    <property type="entry name" value="TRANSMEMBRANE PROTEIN"/>
    <property type="match status" value="1"/>
</dbReference>
<dbReference type="Pfam" id="PF01594">
    <property type="entry name" value="AI-2E_transport"/>
    <property type="match status" value="1"/>
</dbReference>